<dbReference type="EC" id="2.1.1.228" evidence="1"/>
<dbReference type="EMBL" id="CU468230">
    <property type="protein sequence ID" value="CAO99722.1"/>
    <property type="molecule type" value="Genomic_DNA"/>
</dbReference>
<dbReference type="SMR" id="B0VQ58"/>
<dbReference type="KEGG" id="abm:ABSDF0328"/>
<dbReference type="HOGENOM" id="CLU_047363_0_1_6"/>
<dbReference type="Proteomes" id="UP000001741">
    <property type="component" value="Chromosome"/>
</dbReference>
<dbReference type="GO" id="GO:0005829">
    <property type="term" value="C:cytosol"/>
    <property type="evidence" value="ECO:0007669"/>
    <property type="project" value="TreeGrafter"/>
</dbReference>
<dbReference type="GO" id="GO:0052906">
    <property type="term" value="F:tRNA (guanine(37)-N1)-methyltransferase activity"/>
    <property type="evidence" value="ECO:0007669"/>
    <property type="project" value="UniProtKB-UniRule"/>
</dbReference>
<dbReference type="GO" id="GO:0002939">
    <property type="term" value="P:tRNA N1-guanine methylation"/>
    <property type="evidence" value="ECO:0007669"/>
    <property type="project" value="TreeGrafter"/>
</dbReference>
<dbReference type="CDD" id="cd18080">
    <property type="entry name" value="TrmD-like"/>
    <property type="match status" value="1"/>
</dbReference>
<dbReference type="FunFam" id="1.10.1270.20:FF:000001">
    <property type="entry name" value="tRNA (guanine-N(1)-)-methyltransferase"/>
    <property type="match status" value="1"/>
</dbReference>
<dbReference type="FunFam" id="3.40.1280.10:FF:000001">
    <property type="entry name" value="tRNA (guanine-N(1)-)-methyltransferase"/>
    <property type="match status" value="1"/>
</dbReference>
<dbReference type="Gene3D" id="3.40.1280.10">
    <property type="match status" value="1"/>
</dbReference>
<dbReference type="Gene3D" id="1.10.1270.20">
    <property type="entry name" value="tRNA(m1g37)methyltransferase, domain 2"/>
    <property type="match status" value="1"/>
</dbReference>
<dbReference type="HAMAP" id="MF_00605">
    <property type="entry name" value="TrmD"/>
    <property type="match status" value="1"/>
</dbReference>
<dbReference type="InterPro" id="IPR029028">
    <property type="entry name" value="Alpha/beta_knot_MTases"/>
</dbReference>
<dbReference type="InterPro" id="IPR023148">
    <property type="entry name" value="tRNA_m1G_MeTrfase_C_sf"/>
</dbReference>
<dbReference type="InterPro" id="IPR002649">
    <property type="entry name" value="tRNA_m1G_MeTrfase_TrmD"/>
</dbReference>
<dbReference type="InterPro" id="IPR029026">
    <property type="entry name" value="tRNA_m1G_MTases_N"/>
</dbReference>
<dbReference type="InterPro" id="IPR016009">
    <property type="entry name" value="tRNA_MeTrfase_TRMD/TRM10"/>
</dbReference>
<dbReference type="NCBIfam" id="NF000648">
    <property type="entry name" value="PRK00026.1"/>
    <property type="match status" value="1"/>
</dbReference>
<dbReference type="NCBIfam" id="TIGR00088">
    <property type="entry name" value="trmD"/>
    <property type="match status" value="1"/>
</dbReference>
<dbReference type="PANTHER" id="PTHR46417">
    <property type="entry name" value="TRNA (GUANINE-N(1)-)-METHYLTRANSFERASE"/>
    <property type="match status" value="1"/>
</dbReference>
<dbReference type="PANTHER" id="PTHR46417:SF1">
    <property type="entry name" value="TRNA (GUANINE-N(1)-)-METHYLTRANSFERASE"/>
    <property type="match status" value="1"/>
</dbReference>
<dbReference type="Pfam" id="PF01746">
    <property type="entry name" value="tRNA_m1G_MT"/>
    <property type="match status" value="1"/>
</dbReference>
<dbReference type="PIRSF" id="PIRSF000386">
    <property type="entry name" value="tRNA_mtase"/>
    <property type="match status" value="1"/>
</dbReference>
<dbReference type="SUPFAM" id="SSF75217">
    <property type="entry name" value="alpha/beta knot"/>
    <property type="match status" value="1"/>
</dbReference>
<proteinExistence type="inferred from homology"/>
<name>TRMD_ACIBS</name>
<sequence length="246" mass="27854">MFFAVITLFPEMFEAITAYGISGRAAKRDIVQVTCINPRDFAEGSYRRVDERPFGGGPGMVMMAEPLAKAINHAKQLASQAGCVHVPVVYMSPQGKTLNEQAVQQFVDYDGLIVLCGRYEGVDERLIQHYVDQEWSIGDYVLSGGELPAMVLLDSIIRRLPNVMSDEQSAIQDSFVDGLLDCPQYTKPDQFEGLDVPEILKSGHHANIEKWRFLQRYQRTLERRPELIEQVTLTKQQKKWLSDEQG</sequence>
<comment type="function">
    <text evidence="1">Specifically methylates guanosine-37 in various tRNAs.</text>
</comment>
<comment type="catalytic activity">
    <reaction evidence="1">
        <text>guanosine(37) in tRNA + S-adenosyl-L-methionine = N(1)-methylguanosine(37) in tRNA + S-adenosyl-L-homocysteine + H(+)</text>
        <dbReference type="Rhea" id="RHEA:36899"/>
        <dbReference type="Rhea" id="RHEA-COMP:10145"/>
        <dbReference type="Rhea" id="RHEA-COMP:10147"/>
        <dbReference type="ChEBI" id="CHEBI:15378"/>
        <dbReference type="ChEBI" id="CHEBI:57856"/>
        <dbReference type="ChEBI" id="CHEBI:59789"/>
        <dbReference type="ChEBI" id="CHEBI:73542"/>
        <dbReference type="ChEBI" id="CHEBI:74269"/>
        <dbReference type="EC" id="2.1.1.228"/>
    </reaction>
</comment>
<comment type="subunit">
    <text evidence="1">Homodimer.</text>
</comment>
<comment type="subcellular location">
    <subcellularLocation>
        <location evidence="1">Cytoplasm</location>
    </subcellularLocation>
</comment>
<comment type="similarity">
    <text evidence="1">Belongs to the RNA methyltransferase TrmD family.</text>
</comment>
<keyword id="KW-0963">Cytoplasm</keyword>
<keyword id="KW-0489">Methyltransferase</keyword>
<keyword id="KW-0949">S-adenosyl-L-methionine</keyword>
<keyword id="KW-0808">Transferase</keyword>
<keyword id="KW-0819">tRNA processing</keyword>
<gene>
    <name evidence="1" type="primary">trmD</name>
    <name type="ordered locus">ABSDF0328</name>
</gene>
<organism>
    <name type="scientific">Acinetobacter baumannii (strain SDF)</name>
    <dbReference type="NCBI Taxonomy" id="509170"/>
    <lineage>
        <taxon>Bacteria</taxon>
        <taxon>Pseudomonadati</taxon>
        <taxon>Pseudomonadota</taxon>
        <taxon>Gammaproteobacteria</taxon>
        <taxon>Moraxellales</taxon>
        <taxon>Moraxellaceae</taxon>
        <taxon>Acinetobacter</taxon>
        <taxon>Acinetobacter calcoaceticus/baumannii complex</taxon>
    </lineage>
</organism>
<evidence type="ECO:0000255" key="1">
    <source>
        <dbReference type="HAMAP-Rule" id="MF_00605"/>
    </source>
</evidence>
<protein>
    <recommendedName>
        <fullName evidence="1">tRNA (guanine-N(1)-)-methyltransferase</fullName>
        <ecNumber evidence="1">2.1.1.228</ecNumber>
    </recommendedName>
    <alternativeName>
        <fullName evidence="1">M1G-methyltransferase</fullName>
    </alternativeName>
    <alternativeName>
        <fullName evidence="1">tRNA [GM37] methyltransferase</fullName>
    </alternativeName>
</protein>
<feature type="chain" id="PRO_1000130121" description="tRNA (guanine-N(1)-)-methyltransferase">
    <location>
        <begin position="1"/>
        <end position="246"/>
    </location>
</feature>
<feature type="binding site" evidence="1">
    <location>
        <position position="117"/>
    </location>
    <ligand>
        <name>S-adenosyl-L-methionine</name>
        <dbReference type="ChEBI" id="CHEBI:59789"/>
    </ligand>
</feature>
<feature type="binding site" evidence="1">
    <location>
        <begin position="137"/>
        <end position="142"/>
    </location>
    <ligand>
        <name>S-adenosyl-L-methionine</name>
        <dbReference type="ChEBI" id="CHEBI:59789"/>
    </ligand>
</feature>
<accession>B0VQ58</accession>
<reference key="1">
    <citation type="journal article" date="2008" name="PLoS ONE">
        <title>Comparative analysis of Acinetobacters: three genomes for three lifestyles.</title>
        <authorList>
            <person name="Vallenet D."/>
            <person name="Nordmann P."/>
            <person name="Barbe V."/>
            <person name="Poirel L."/>
            <person name="Mangenot S."/>
            <person name="Bataille E."/>
            <person name="Dossat C."/>
            <person name="Gas S."/>
            <person name="Kreimeyer A."/>
            <person name="Lenoble P."/>
            <person name="Oztas S."/>
            <person name="Poulain J."/>
            <person name="Segurens B."/>
            <person name="Robert C."/>
            <person name="Abergel C."/>
            <person name="Claverie J.-M."/>
            <person name="Raoult D."/>
            <person name="Medigue C."/>
            <person name="Weissenbach J."/>
            <person name="Cruveiller S."/>
        </authorList>
    </citation>
    <scope>NUCLEOTIDE SEQUENCE [LARGE SCALE GENOMIC DNA]</scope>
    <source>
        <strain>SDF</strain>
    </source>
</reference>